<name>CHIT_YEAST</name>
<evidence type="ECO:0000255" key="1"/>
<evidence type="ECO:0000255" key="2">
    <source>
        <dbReference type="PROSITE-ProRule" id="PRU01258"/>
    </source>
</evidence>
<evidence type="ECO:0000256" key="3">
    <source>
        <dbReference type="SAM" id="MobiDB-lite"/>
    </source>
</evidence>
<evidence type="ECO:0000269" key="4">
    <source>
    </source>
</evidence>
<evidence type="ECO:0000269" key="5">
    <source>
    </source>
</evidence>
<evidence type="ECO:0000269" key="6">
    <source>
    </source>
</evidence>
<evidence type="ECO:0000305" key="7"/>
<evidence type="ECO:0007829" key="8">
    <source>
        <dbReference type="PDB" id="2UY2"/>
    </source>
</evidence>
<evidence type="ECO:0007829" key="9">
    <source>
        <dbReference type="PDB" id="2UY4"/>
    </source>
</evidence>
<evidence type="ECO:0007829" key="10">
    <source>
        <dbReference type="PDB" id="2UY5"/>
    </source>
</evidence>
<evidence type="ECO:0007829" key="11">
    <source>
        <dbReference type="PDB" id="4TXE"/>
    </source>
</evidence>
<sequence>MSLLYIILLFTQFLLLPTDAFDRSANTNIAVYWGQNSAGTQESLATYCESSDADIFLLSFLNQFPTLGLNFANACSDTFSDGLLHCTQIAEDIETCQSLGKKVLLSLGGASGSYLFSDDSQAETFAQTLWDTFGEGTGASERPFDSAVVDGFDFDIENNNEVGYSALATKLRTLFAEGTKQYYLSAAPQCPYPDASVGDLLENADIDFAFIQFYNNYCSVSGQFNWDTWLTYAQTVSPNKNIKLFLGLPGSASAAGSGYISDTSLLESTIADIASSSSFGGIALWDASQAFSNELNGEPYVEILKNLLTSASQTATTTVATSKTSAASTSSASTSSASTSQKKTTQSTTSTQSKSKVTLSPTASSAIKTSITQTTKTLTSSTKTKSSLGTTTTESTLNSVAITSMKTTLSSQITSAALVTPQTTTTSIVSSAPIQTAITSTLSPATKSSSVVSLQTATTSTLSPTTTSTSSGSTSSGSTSSDSTARTLAKELNAQYAAGKLNGKSTCTEGEIACSADGKFAVCDHSAWVYMECASGTTCYAYDSGDSVYTQCNFSYLESNYF</sequence>
<dbReference type="EC" id="3.2.1.14"/>
<dbReference type="EMBL" id="M74070">
    <property type="protein sequence ID" value="AAA34539.1"/>
    <property type="molecule type" value="Genomic_DNA"/>
</dbReference>
<dbReference type="EMBL" id="M74069">
    <property type="protein sequence ID" value="AAA34538.1"/>
    <property type="molecule type" value="Genomic_DNA"/>
</dbReference>
<dbReference type="EMBL" id="U17243">
    <property type="protein sequence ID" value="AAB67331.1"/>
    <property type="molecule type" value="Genomic_DNA"/>
</dbReference>
<dbReference type="EMBL" id="AY693040">
    <property type="protein sequence ID" value="AAT93059.1"/>
    <property type="molecule type" value="Genomic_DNA"/>
</dbReference>
<dbReference type="EMBL" id="BK006945">
    <property type="protein sequence ID" value="DAA09597.1"/>
    <property type="molecule type" value="Genomic_DNA"/>
</dbReference>
<dbReference type="PIR" id="A41035">
    <property type="entry name" value="A41035"/>
</dbReference>
<dbReference type="PIR" id="B41035">
    <property type="entry name" value="B41035"/>
</dbReference>
<dbReference type="PIR" id="S50371">
    <property type="entry name" value="S50371"/>
</dbReference>
<dbReference type="RefSeq" id="NP_013388.1">
    <property type="nucleotide sequence ID" value="NM_001182173.1"/>
</dbReference>
<dbReference type="PDB" id="2UY2">
    <property type="method" value="X-ray"/>
    <property type="resolution" value="1.60 A"/>
    <property type="chains" value="A=22-315"/>
</dbReference>
<dbReference type="PDB" id="2UY3">
    <property type="method" value="X-ray"/>
    <property type="resolution" value="1.90 A"/>
    <property type="chains" value="A=22-315"/>
</dbReference>
<dbReference type="PDB" id="2UY4">
    <property type="method" value="X-ray"/>
    <property type="resolution" value="1.75 A"/>
    <property type="chains" value="A=22-315"/>
</dbReference>
<dbReference type="PDB" id="2UY5">
    <property type="method" value="X-ray"/>
    <property type="resolution" value="1.60 A"/>
    <property type="chains" value="A=22-315"/>
</dbReference>
<dbReference type="PDB" id="4TXE">
    <property type="method" value="X-ray"/>
    <property type="resolution" value="1.80 A"/>
    <property type="chains" value="A=22-315"/>
</dbReference>
<dbReference type="PDBsum" id="2UY2"/>
<dbReference type="PDBsum" id="2UY3"/>
<dbReference type="PDBsum" id="2UY4"/>
<dbReference type="PDBsum" id="2UY5"/>
<dbReference type="PDBsum" id="4TXE"/>
<dbReference type="SMR" id="P29029"/>
<dbReference type="BioGRID" id="31551">
    <property type="interactions" value="95"/>
</dbReference>
<dbReference type="FunCoup" id="P29029">
    <property type="interactions" value="275"/>
</dbReference>
<dbReference type="STRING" id="4932.YLR286C"/>
<dbReference type="BindingDB" id="P29029"/>
<dbReference type="ChEMBL" id="CHEMBL1293195"/>
<dbReference type="DrugCentral" id="P29029"/>
<dbReference type="CAZy" id="CBM19">
    <property type="family name" value="Carbohydrate-Binding Module Family 19"/>
</dbReference>
<dbReference type="CAZy" id="GH18">
    <property type="family name" value="Glycoside Hydrolase Family 18"/>
</dbReference>
<dbReference type="GlyCosmos" id="P29029">
    <property type="glycosylation" value="1 site, No reported glycans"/>
</dbReference>
<dbReference type="GlyGen" id="P29029">
    <property type="glycosylation" value="1 site"/>
</dbReference>
<dbReference type="iPTMnet" id="P29029"/>
<dbReference type="PaxDb" id="4932-YLR286C"/>
<dbReference type="PeptideAtlas" id="P29029"/>
<dbReference type="EnsemblFungi" id="YLR286C_mRNA">
    <property type="protein sequence ID" value="YLR286C"/>
    <property type="gene ID" value="YLR286C"/>
</dbReference>
<dbReference type="GeneID" id="850992"/>
<dbReference type="KEGG" id="sce:YLR286C"/>
<dbReference type="AGR" id="SGD:S000004276"/>
<dbReference type="SGD" id="S000004276">
    <property type="gene designation" value="CTS1"/>
</dbReference>
<dbReference type="VEuPathDB" id="FungiDB:YLR286C"/>
<dbReference type="eggNOG" id="KOG4701">
    <property type="taxonomic scope" value="Eukaryota"/>
</dbReference>
<dbReference type="HOGENOM" id="CLU_007818_7_0_1"/>
<dbReference type="InParanoid" id="P29029"/>
<dbReference type="OMA" id="THGEMAC"/>
<dbReference type="OrthoDB" id="6020543at2759"/>
<dbReference type="BioCyc" id="YEAST:YLR286C-MONOMER"/>
<dbReference type="BRENDA" id="3.2.1.14">
    <property type="organism ID" value="984"/>
</dbReference>
<dbReference type="BioGRID-ORCS" id="850992">
    <property type="hits" value="0 hits in 10 CRISPR screens"/>
</dbReference>
<dbReference type="EvolutionaryTrace" id="P29029"/>
<dbReference type="PRO" id="PR:P29029"/>
<dbReference type="Proteomes" id="UP000002311">
    <property type="component" value="Chromosome XII"/>
</dbReference>
<dbReference type="RNAct" id="P29029">
    <property type="molecule type" value="protein"/>
</dbReference>
<dbReference type="GO" id="GO:0005935">
    <property type="term" value="C:cellular bud neck"/>
    <property type="evidence" value="ECO:0000314"/>
    <property type="project" value="SGD"/>
</dbReference>
<dbReference type="GO" id="GO:0005783">
    <property type="term" value="C:endoplasmic reticulum"/>
    <property type="evidence" value="ECO:0007005"/>
    <property type="project" value="SGD"/>
</dbReference>
<dbReference type="GO" id="GO:0005576">
    <property type="term" value="C:extracellular region"/>
    <property type="evidence" value="ECO:0000314"/>
    <property type="project" value="SGD"/>
</dbReference>
<dbReference type="GO" id="GO:0009277">
    <property type="term" value="C:fungal-type cell wall"/>
    <property type="evidence" value="ECO:0000314"/>
    <property type="project" value="SGD"/>
</dbReference>
<dbReference type="GO" id="GO:0000324">
    <property type="term" value="C:fungal-type vacuole"/>
    <property type="evidence" value="ECO:0007005"/>
    <property type="project" value="SGD"/>
</dbReference>
<dbReference type="GO" id="GO:0005635">
    <property type="term" value="C:nuclear envelope"/>
    <property type="evidence" value="ECO:0007005"/>
    <property type="project" value="SGD"/>
</dbReference>
<dbReference type="GO" id="GO:0008061">
    <property type="term" value="F:chitin binding"/>
    <property type="evidence" value="ECO:0007669"/>
    <property type="project" value="UniProtKB-KW"/>
</dbReference>
<dbReference type="GO" id="GO:0004568">
    <property type="term" value="F:chitinase activity"/>
    <property type="evidence" value="ECO:0000318"/>
    <property type="project" value="GO_Central"/>
</dbReference>
<dbReference type="GO" id="GO:0008843">
    <property type="term" value="F:endochitinase activity"/>
    <property type="evidence" value="ECO:0000314"/>
    <property type="project" value="SGD"/>
</dbReference>
<dbReference type="GO" id="GO:0071555">
    <property type="term" value="P:cell wall organization"/>
    <property type="evidence" value="ECO:0007669"/>
    <property type="project" value="UniProtKB-KW"/>
</dbReference>
<dbReference type="GO" id="GO:0006032">
    <property type="term" value="P:chitin catabolic process"/>
    <property type="evidence" value="ECO:0007669"/>
    <property type="project" value="UniProtKB-KW"/>
</dbReference>
<dbReference type="GO" id="GO:0000272">
    <property type="term" value="P:polysaccharide catabolic process"/>
    <property type="evidence" value="ECO:0007669"/>
    <property type="project" value="UniProtKB-KW"/>
</dbReference>
<dbReference type="GO" id="GO:0000920">
    <property type="term" value="P:septum digestion after cytokinesis"/>
    <property type="evidence" value="ECO:0000315"/>
    <property type="project" value="SGD"/>
</dbReference>
<dbReference type="CDD" id="cd02877">
    <property type="entry name" value="GH18_hevamine_XipI_class_III"/>
    <property type="match status" value="1"/>
</dbReference>
<dbReference type="FunFam" id="3.20.20.80:FF:000125">
    <property type="entry name" value="CTS1p Endochitinase"/>
    <property type="match status" value="1"/>
</dbReference>
<dbReference type="Gene3D" id="3.20.20.80">
    <property type="entry name" value="Glycosidases"/>
    <property type="match status" value="1"/>
</dbReference>
<dbReference type="InterPro" id="IPR005089">
    <property type="entry name" value="CBM19"/>
</dbReference>
<dbReference type="InterPro" id="IPR045321">
    <property type="entry name" value="Cts1-like"/>
</dbReference>
<dbReference type="InterPro" id="IPR001223">
    <property type="entry name" value="Glyco_hydro18_cat"/>
</dbReference>
<dbReference type="InterPro" id="IPR001579">
    <property type="entry name" value="Glyco_hydro_18_chit_AS"/>
</dbReference>
<dbReference type="InterPro" id="IPR017853">
    <property type="entry name" value="Glycoside_hydrolase_SF"/>
</dbReference>
<dbReference type="InterPro" id="IPR050542">
    <property type="entry name" value="Glycosyl_Hydrlase18_Chitinase"/>
</dbReference>
<dbReference type="PANTHER" id="PTHR45708">
    <property type="entry name" value="ENDOCHITINASE"/>
    <property type="match status" value="1"/>
</dbReference>
<dbReference type="PANTHER" id="PTHR45708:SF49">
    <property type="entry name" value="ENDOCHITINASE"/>
    <property type="match status" value="1"/>
</dbReference>
<dbReference type="Pfam" id="PF03427">
    <property type="entry name" value="CBM_19"/>
    <property type="match status" value="1"/>
</dbReference>
<dbReference type="Pfam" id="PF00704">
    <property type="entry name" value="Glyco_hydro_18"/>
    <property type="match status" value="1"/>
</dbReference>
<dbReference type="SUPFAM" id="SSF51445">
    <property type="entry name" value="(Trans)glycosidases"/>
    <property type="match status" value="1"/>
</dbReference>
<dbReference type="PROSITE" id="PS01095">
    <property type="entry name" value="GH18_1"/>
    <property type="match status" value="1"/>
</dbReference>
<dbReference type="PROSITE" id="PS51910">
    <property type="entry name" value="GH18_2"/>
    <property type="match status" value="1"/>
</dbReference>
<organism>
    <name type="scientific">Saccharomyces cerevisiae (strain ATCC 204508 / S288c)</name>
    <name type="common">Baker's yeast</name>
    <dbReference type="NCBI Taxonomy" id="559292"/>
    <lineage>
        <taxon>Eukaryota</taxon>
        <taxon>Fungi</taxon>
        <taxon>Dikarya</taxon>
        <taxon>Ascomycota</taxon>
        <taxon>Saccharomycotina</taxon>
        <taxon>Saccharomycetes</taxon>
        <taxon>Saccharomycetales</taxon>
        <taxon>Saccharomycetaceae</taxon>
        <taxon>Saccharomyces</taxon>
    </lineage>
</organism>
<accession>P29029</accession>
<accession>D6VYT1</accession>
<accession>P29028</accession>
<comment type="function">
    <text>Chitinase is required for cell separation during growth of S.cerevisiae.</text>
</comment>
<comment type="catalytic activity">
    <reaction>
        <text>Random endo-hydrolysis of N-acetyl-beta-D-glucosaminide (1-&gt;4)-beta-linkages in chitin and chitodextrins.</text>
        <dbReference type="EC" id="3.2.1.14"/>
    </reaction>
</comment>
<comment type="subcellular location">
    <subcellularLocation>
        <location evidence="6">Secreted</location>
    </subcellularLocation>
    <subcellularLocation>
        <location evidence="6">Secreted</location>
        <location evidence="6">Cell wall</location>
    </subcellularLocation>
    <text>Most of the enzyme is secreted, but a significant amount of chitinase is also found associated with the cell wall through binding of C-terminal domain to chitin.</text>
</comment>
<comment type="PTM">
    <text>Extensively glycosylated with a series of short O-linked mannose oligosaccharides ranging in size from Man(2) to Man(5).</text>
</comment>
<comment type="miscellaneous">
    <text evidence="4">Present with 6350 molecules/cell in log phase SD medium.</text>
</comment>
<comment type="similarity">
    <text evidence="7">Belongs to the glycosyl hydrolase 18 family. Chitinase class V subfamily.</text>
</comment>
<proteinExistence type="evidence at protein level"/>
<reference key="1">
    <citation type="journal article" date="1991" name="J. Biol. Chem.">
        <title>Chitinase is required for cell separation during growth of Saccharomyces cerevisiae.</title>
        <authorList>
            <person name="Kuranda M.J."/>
            <person name="Robbins P.W."/>
        </authorList>
    </citation>
    <scope>NUCLEOTIDE SEQUENCE [GENOMIC DNA]</scope>
    <scope>PROTEIN SEQUENCE OF 21-38</scope>
    <source>
        <strain>DBY918</strain>
        <strain>DBY939</strain>
    </source>
</reference>
<reference key="2">
    <citation type="journal article" date="1997" name="Nature">
        <title>The nucleotide sequence of Saccharomyces cerevisiae chromosome XII.</title>
        <authorList>
            <person name="Johnston M."/>
            <person name="Hillier L.W."/>
            <person name="Riles L."/>
            <person name="Albermann K."/>
            <person name="Andre B."/>
            <person name="Ansorge W."/>
            <person name="Benes V."/>
            <person name="Brueckner M."/>
            <person name="Delius H."/>
            <person name="Dubois E."/>
            <person name="Duesterhoeft A."/>
            <person name="Entian K.-D."/>
            <person name="Floeth M."/>
            <person name="Goffeau A."/>
            <person name="Hebling U."/>
            <person name="Heumann K."/>
            <person name="Heuss-Neitzel D."/>
            <person name="Hilbert H."/>
            <person name="Hilger F."/>
            <person name="Kleine K."/>
            <person name="Koetter P."/>
            <person name="Louis E.J."/>
            <person name="Messenguy F."/>
            <person name="Mewes H.-W."/>
            <person name="Miosga T."/>
            <person name="Moestl D."/>
            <person name="Mueller-Auer S."/>
            <person name="Nentwich U."/>
            <person name="Obermaier B."/>
            <person name="Piravandi E."/>
            <person name="Pohl T.M."/>
            <person name="Portetelle D."/>
            <person name="Purnelle B."/>
            <person name="Rechmann S."/>
            <person name="Rieger M."/>
            <person name="Rinke M."/>
            <person name="Rose M."/>
            <person name="Scharfe M."/>
            <person name="Scherens B."/>
            <person name="Scholler P."/>
            <person name="Schwager C."/>
            <person name="Schwarz S."/>
            <person name="Underwood A.P."/>
            <person name="Urrestarazu L.A."/>
            <person name="Vandenbol M."/>
            <person name="Verhasselt P."/>
            <person name="Vierendeels F."/>
            <person name="Voet M."/>
            <person name="Volckaert G."/>
            <person name="Voss H."/>
            <person name="Wambutt R."/>
            <person name="Wedler E."/>
            <person name="Wedler H."/>
            <person name="Zimmermann F.K."/>
            <person name="Zollner A."/>
            <person name="Hani J."/>
            <person name="Hoheisel J.D."/>
        </authorList>
    </citation>
    <scope>NUCLEOTIDE SEQUENCE [LARGE SCALE GENOMIC DNA]</scope>
    <source>
        <strain>ATCC 204508 / S288c</strain>
    </source>
</reference>
<reference key="3">
    <citation type="journal article" date="2014" name="G3 (Bethesda)">
        <title>The reference genome sequence of Saccharomyces cerevisiae: Then and now.</title>
        <authorList>
            <person name="Engel S.R."/>
            <person name="Dietrich F.S."/>
            <person name="Fisk D.G."/>
            <person name="Binkley G."/>
            <person name="Balakrishnan R."/>
            <person name="Costanzo M.C."/>
            <person name="Dwight S.S."/>
            <person name="Hitz B.C."/>
            <person name="Karra K."/>
            <person name="Nash R.S."/>
            <person name="Weng S."/>
            <person name="Wong E.D."/>
            <person name="Lloyd P."/>
            <person name="Skrzypek M.S."/>
            <person name="Miyasato S.R."/>
            <person name="Simison M."/>
            <person name="Cherry J.M."/>
        </authorList>
    </citation>
    <scope>GENOME REANNOTATION</scope>
    <source>
        <strain>ATCC 204508 / S288c</strain>
    </source>
</reference>
<reference key="4">
    <citation type="journal article" date="2007" name="Genome Res.">
        <title>Approaching a complete repository of sequence-verified protein-encoding clones for Saccharomyces cerevisiae.</title>
        <authorList>
            <person name="Hu Y."/>
            <person name="Rolfs A."/>
            <person name="Bhullar B."/>
            <person name="Murthy T.V.S."/>
            <person name="Zhu C."/>
            <person name="Berger M.F."/>
            <person name="Camargo A.A."/>
            <person name="Kelley F."/>
            <person name="McCarron S."/>
            <person name="Jepson D."/>
            <person name="Richardson A."/>
            <person name="Raphael J."/>
            <person name="Moreira D."/>
            <person name="Taycher E."/>
            <person name="Zuo D."/>
            <person name="Mohr S."/>
            <person name="Kane M.F."/>
            <person name="Williamson J."/>
            <person name="Simpson A.J.G."/>
            <person name="Bulyk M.L."/>
            <person name="Harlow E."/>
            <person name="Marsischky G."/>
            <person name="Kolodner R.D."/>
            <person name="LaBaer J."/>
        </authorList>
    </citation>
    <scope>NUCLEOTIDE SEQUENCE [GENOMIC DNA]</scope>
    <source>
        <strain>ATCC 204508 / S288c</strain>
    </source>
</reference>
<reference key="5">
    <citation type="journal article" date="1998" name="J. Bacteriol.">
        <title>New potential cell wall glucanases of Saccharomyces cerevisiae and their involvement in mating.</title>
        <authorList>
            <person name="Cappellaro C."/>
            <person name="Mrsa V."/>
            <person name="Tanner W."/>
        </authorList>
    </citation>
    <scope>PROTEIN SEQUENCE OF 21-32</scope>
    <scope>SUBCELLULAR LOCATION</scope>
    <source>
        <strain>ATCC 96099 / S288c / SEY6210</strain>
    </source>
</reference>
<reference key="6">
    <citation type="journal article" date="2003" name="Nature">
        <title>Global analysis of protein expression in yeast.</title>
        <authorList>
            <person name="Ghaemmaghami S."/>
            <person name="Huh W.-K."/>
            <person name="Bower K."/>
            <person name="Howson R.W."/>
            <person name="Belle A."/>
            <person name="Dephoure N."/>
            <person name="O'Shea E.K."/>
            <person name="Weissman J.S."/>
        </authorList>
    </citation>
    <scope>LEVEL OF PROTEIN EXPRESSION [LARGE SCALE ANALYSIS]</scope>
</reference>
<protein>
    <recommendedName>
        <fullName>Endochitinase</fullName>
        <ecNumber>3.2.1.14</ecNumber>
    </recommendedName>
    <alternativeName>
        <fullName>Soluble cell wall protein 2</fullName>
    </alternativeName>
</protein>
<feature type="signal peptide" evidence="5 6">
    <location>
        <begin position="1"/>
        <end position="20"/>
    </location>
</feature>
<feature type="chain" id="PRO_0000011936" description="Endochitinase">
    <location>
        <begin position="21"/>
        <end position="562"/>
    </location>
</feature>
<feature type="domain" description="GH18" evidence="2">
    <location>
        <begin position="27"/>
        <end position="311"/>
    </location>
</feature>
<feature type="region of interest" description="Disordered" evidence="3">
    <location>
        <begin position="329"/>
        <end position="358"/>
    </location>
</feature>
<feature type="region of interest" description="Disordered" evidence="3">
    <location>
        <begin position="461"/>
        <end position="484"/>
    </location>
</feature>
<feature type="region of interest" description="Chitin-binding, high affinity">
    <location>
        <begin position="481"/>
        <end position="562"/>
    </location>
</feature>
<feature type="active site" description="Proton donor" evidence="2">
    <location>
        <position position="157"/>
    </location>
</feature>
<feature type="glycosylation site" description="N-linked (GlcNAc...) asparagine" evidence="1">
    <location>
        <position position="553"/>
    </location>
</feature>
<feature type="sequence variant" description="In strain: DBY939.">
    <original>L</original>
    <variation>P</variation>
    <location>
        <position position="16"/>
    </location>
</feature>
<feature type="sequence variant" description="In strain: DBY939 and SEY6210.">
    <original>R</original>
    <variation>S</variation>
    <location>
        <position position="23"/>
    </location>
</feature>
<feature type="sequence variant" description="In strain: DBY939.">
    <original>T</original>
    <variation>S</variation>
    <location>
        <position position="321"/>
    </location>
</feature>
<feature type="sequence variant" description="In strain: DBY939.">
    <location>
        <begin position="336"/>
        <end position="340"/>
    </location>
</feature>
<feature type="sequence variant" description="In strain: DBY939.">
    <original>S</original>
    <variation>A</variation>
    <location>
        <position position="399"/>
    </location>
</feature>
<feature type="sequence variant" description="In strain: DBY939.">
    <original>PI</original>
    <variation>SL</variation>
    <location>
        <begin position="433"/>
        <end position="434"/>
    </location>
</feature>
<feature type="sequence variant" description="In strain: DBY939.">
    <original>T</original>
    <variation>K</variation>
    <location>
        <position position="461"/>
    </location>
</feature>
<feature type="sequence variant" description="In strain: DBY939.">
    <location>
        <begin position="477"/>
        <end position="481"/>
    </location>
</feature>
<feature type="sequence conflict" description="In Ref. 1; AAA34539/AAA34538." evidence="7" ref="1">
    <original>A</original>
    <variation>R</variation>
    <location>
        <position position="168"/>
    </location>
</feature>
<feature type="strand" evidence="8">
    <location>
        <begin position="28"/>
        <end position="35"/>
    </location>
</feature>
<feature type="helix" evidence="8">
    <location>
        <begin position="44"/>
        <end position="48"/>
    </location>
</feature>
<feature type="strand" evidence="8">
    <location>
        <begin position="50"/>
        <end position="52"/>
    </location>
</feature>
<feature type="strand" evidence="8">
    <location>
        <begin position="54"/>
        <end position="64"/>
    </location>
</feature>
<feature type="turn" evidence="8">
    <location>
        <begin position="65"/>
        <end position="67"/>
    </location>
</feature>
<feature type="helix" evidence="8">
    <location>
        <begin position="72"/>
        <end position="74"/>
    </location>
</feature>
<feature type="helix" evidence="8">
    <location>
        <begin position="87"/>
        <end position="98"/>
    </location>
</feature>
<feature type="strand" evidence="8">
    <location>
        <begin position="102"/>
        <end position="108"/>
    </location>
</feature>
<feature type="strand" evidence="9">
    <location>
        <begin position="110"/>
        <end position="114"/>
    </location>
</feature>
<feature type="helix" evidence="8">
    <location>
        <begin position="119"/>
        <end position="133"/>
    </location>
</feature>
<feature type="turn" evidence="8">
    <location>
        <begin position="143"/>
        <end position="146"/>
    </location>
</feature>
<feature type="strand" evidence="8">
    <location>
        <begin position="150"/>
        <end position="155"/>
    </location>
</feature>
<feature type="helix" evidence="8">
    <location>
        <begin position="164"/>
        <end position="175"/>
    </location>
</feature>
<feature type="strand" evidence="8">
    <location>
        <begin position="178"/>
        <end position="180"/>
    </location>
</feature>
<feature type="strand" evidence="8">
    <location>
        <begin position="183"/>
        <end position="186"/>
    </location>
</feature>
<feature type="strand" evidence="8">
    <location>
        <begin position="189"/>
        <end position="193"/>
    </location>
</feature>
<feature type="turn" evidence="8">
    <location>
        <begin position="195"/>
        <end position="197"/>
    </location>
</feature>
<feature type="helix" evidence="8">
    <location>
        <begin position="198"/>
        <end position="203"/>
    </location>
</feature>
<feature type="strand" evidence="8">
    <location>
        <begin position="207"/>
        <end position="212"/>
    </location>
</feature>
<feature type="strand" evidence="8">
    <location>
        <begin position="214"/>
        <end position="216"/>
    </location>
</feature>
<feature type="strand" evidence="10">
    <location>
        <begin position="219"/>
        <end position="223"/>
    </location>
</feature>
<feature type="helix" evidence="8">
    <location>
        <begin position="226"/>
        <end position="235"/>
    </location>
</feature>
<feature type="strand" evidence="8">
    <location>
        <begin position="243"/>
        <end position="251"/>
    </location>
</feature>
<feature type="strand" evidence="8">
    <location>
        <begin position="254"/>
        <end position="257"/>
    </location>
</feature>
<feature type="helix" evidence="8">
    <location>
        <begin position="263"/>
        <end position="273"/>
    </location>
</feature>
<feature type="strand" evidence="8">
    <location>
        <begin position="279"/>
        <end position="285"/>
    </location>
</feature>
<feature type="helix" evidence="8">
    <location>
        <begin position="287"/>
        <end position="292"/>
    </location>
</feature>
<feature type="strand" evidence="11">
    <location>
        <begin position="294"/>
        <end position="299"/>
    </location>
</feature>
<feature type="helix" evidence="8">
    <location>
        <begin position="300"/>
        <end position="311"/>
    </location>
</feature>
<keyword id="KW-0002">3D-structure</keyword>
<keyword id="KW-0119">Carbohydrate metabolism</keyword>
<keyword id="KW-0134">Cell wall</keyword>
<keyword id="KW-0961">Cell wall biogenesis/degradation</keyword>
<keyword id="KW-0146">Chitin degradation</keyword>
<keyword id="KW-0147">Chitin-binding</keyword>
<keyword id="KW-0903">Direct protein sequencing</keyword>
<keyword id="KW-0325">Glycoprotein</keyword>
<keyword id="KW-0326">Glycosidase</keyword>
<keyword id="KW-0378">Hydrolase</keyword>
<keyword id="KW-0624">Polysaccharide degradation</keyword>
<keyword id="KW-1185">Reference proteome</keyword>
<keyword id="KW-0964">Secreted</keyword>
<keyword id="KW-0732">Signal</keyword>
<gene>
    <name type="primary">CTS1</name>
    <name type="synonym">SCW2</name>
    <name type="ordered locus">YLR286C</name>
    <name type="ORF">L8003.13</name>
</gene>